<organism>
    <name type="scientific">Escherichia coli (strain K12 / DH10B)</name>
    <dbReference type="NCBI Taxonomy" id="316385"/>
    <lineage>
        <taxon>Bacteria</taxon>
        <taxon>Pseudomonadati</taxon>
        <taxon>Pseudomonadota</taxon>
        <taxon>Gammaproteobacteria</taxon>
        <taxon>Enterobacterales</taxon>
        <taxon>Enterobacteriaceae</taxon>
        <taxon>Escherichia</taxon>
    </lineage>
</organism>
<sequence>MTTKRKPYVRPMTSTWWKKLPFYRFYMLREGTAVPAVWFSIELIFGLFALKNGPEAWAGFVDFLQNPVIVIINLITLAAALLHTKTWFELAPKAANIIVKDEKMGPEPIIKSLWAVTVVATIVILFVALYW</sequence>
<evidence type="ECO:0000255" key="1">
    <source>
        <dbReference type="HAMAP-Rule" id="MF_00708"/>
    </source>
</evidence>
<accession>B1XDQ7</accession>
<gene>
    <name evidence="1" type="primary">frdC</name>
    <name type="ordered locus">ECDH10B_4347</name>
</gene>
<feature type="chain" id="PRO_1000132373" description="Fumarate reductase subunit C">
    <location>
        <begin position="1"/>
        <end position="131"/>
    </location>
</feature>
<feature type="transmembrane region" description="Helical" evidence="1">
    <location>
        <begin position="30"/>
        <end position="50"/>
    </location>
</feature>
<feature type="transmembrane region" description="Helical" evidence="1">
    <location>
        <begin position="63"/>
        <end position="83"/>
    </location>
</feature>
<feature type="transmembrane region" description="Helical" evidence="1">
    <location>
        <begin position="109"/>
        <end position="129"/>
    </location>
</feature>
<comment type="function">
    <text evidence="1">Two distinct, membrane-bound, FAD-containing enzymes are responsible for the catalysis of fumarate and succinate interconversion; fumarate reductase is used in anaerobic growth, and succinate dehydrogenase is used in aerobic growth. Anchors the catalytic components of the fumarate reductase complex to the cell inner membrane, binds quinones.</text>
</comment>
<comment type="subunit">
    <text evidence="1">Part of an enzyme complex containing four subunits: a flavoprotein (FrdA), an iron-sulfur protein (FrdB), and two hydrophobic anchor proteins (FrdC and FrdD).</text>
</comment>
<comment type="subcellular location">
    <subcellularLocation>
        <location evidence="1">Cell inner membrane</location>
        <topology evidence="1">Multi-pass membrane protein</topology>
    </subcellularLocation>
</comment>
<comment type="similarity">
    <text evidence="1">Belongs to the FrdC family.</text>
</comment>
<proteinExistence type="inferred from homology"/>
<keyword id="KW-0997">Cell inner membrane</keyword>
<keyword id="KW-1003">Cell membrane</keyword>
<keyword id="KW-0472">Membrane</keyword>
<keyword id="KW-0812">Transmembrane</keyword>
<keyword id="KW-1133">Transmembrane helix</keyword>
<reference key="1">
    <citation type="journal article" date="2008" name="J. Bacteriol.">
        <title>The complete genome sequence of Escherichia coli DH10B: insights into the biology of a laboratory workhorse.</title>
        <authorList>
            <person name="Durfee T."/>
            <person name="Nelson R."/>
            <person name="Baldwin S."/>
            <person name="Plunkett G. III"/>
            <person name="Burland V."/>
            <person name="Mau B."/>
            <person name="Petrosino J.F."/>
            <person name="Qin X."/>
            <person name="Muzny D.M."/>
            <person name="Ayele M."/>
            <person name="Gibbs R.A."/>
            <person name="Csorgo B."/>
            <person name="Posfai G."/>
            <person name="Weinstock G.M."/>
            <person name="Blattner F.R."/>
        </authorList>
    </citation>
    <scope>NUCLEOTIDE SEQUENCE [LARGE SCALE GENOMIC DNA]</scope>
    <source>
        <strain>K12 / DH10B</strain>
    </source>
</reference>
<name>FRDC_ECODH</name>
<protein>
    <recommendedName>
        <fullName evidence="1">Fumarate reductase subunit C</fullName>
    </recommendedName>
    <alternativeName>
        <fullName evidence="1">Fumarate reductase 15 kDa hydrophobic protein</fullName>
    </alternativeName>
    <alternativeName>
        <fullName evidence="1">Quinol-fumarate reductase subunit C</fullName>
        <shortName evidence="1">QFR subunit C</shortName>
    </alternativeName>
</protein>
<dbReference type="EMBL" id="CP000948">
    <property type="protein sequence ID" value="ACB05144.1"/>
    <property type="molecule type" value="Genomic_DNA"/>
</dbReference>
<dbReference type="RefSeq" id="WP_000208757.1">
    <property type="nucleotide sequence ID" value="NC_010473.1"/>
</dbReference>
<dbReference type="SMR" id="B1XDQ7"/>
<dbReference type="GeneID" id="93777670"/>
<dbReference type="KEGG" id="ecd:ECDH10B_4347"/>
<dbReference type="HOGENOM" id="CLU_156492_0_0_6"/>
<dbReference type="GO" id="GO:0045283">
    <property type="term" value="C:fumarate reductase complex"/>
    <property type="evidence" value="ECO:0007669"/>
    <property type="project" value="UniProtKB-UniRule"/>
</dbReference>
<dbReference type="GO" id="GO:0005886">
    <property type="term" value="C:plasma membrane"/>
    <property type="evidence" value="ECO:0007669"/>
    <property type="project" value="UniProtKB-SubCell"/>
</dbReference>
<dbReference type="GO" id="GO:0000104">
    <property type="term" value="F:succinate dehydrogenase activity"/>
    <property type="evidence" value="ECO:0007669"/>
    <property type="project" value="UniProtKB-UniRule"/>
</dbReference>
<dbReference type="CDD" id="cd00546">
    <property type="entry name" value="QFR_TypeD_subunitC"/>
    <property type="match status" value="1"/>
</dbReference>
<dbReference type="FunFam" id="1.20.1300.10:FF:000003">
    <property type="entry name" value="Fumarate reductase subunit C"/>
    <property type="match status" value="1"/>
</dbReference>
<dbReference type="Gene3D" id="1.20.1300.10">
    <property type="entry name" value="Fumarate reductase/succinate dehydrogenase, transmembrane subunit"/>
    <property type="match status" value="1"/>
</dbReference>
<dbReference type="HAMAP" id="MF_00708">
    <property type="entry name" value="Fumarate_red_C"/>
    <property type="match status" value="1"/>
</dbReference>
<dbReference type="InterPro" id="IPR003510">
    <property type="entry name" value="Fumarate_red_C"/>
</dbReference>
<dbReference type="InterPro" id="IPR034804">
    <property type="entry name" value="SQR/QFR_C/D"/>
</dbReference>
<dbReference type="NCBIfam" id="NF003445">
    <property type="entry name" value="PRK04987.1"/>
    <property type="match status" value="1"/>
</dbReference>
<dbReference type="Pfam" id="PF02300">
    <property type="entry name" value="Fumarate_red_C"/>
    <property type="match status" value="1"/>
</dbReference>
<dbReference type="PIRSF" id="PIRSF000180">
    <property type="entry name" value="FrdC"/>
    <property type="match status" value="1"/>
</dbReference>
<dbReference type="SUPFAM" id="SSF81343">
    <property type="entry name" value="Fumarate reductase respiratory complex transmembrane subunits"/>
    <property type="match status" value="1"/>
</dbReference>